<evidence type="ECO:0000250" key="1"/>
<evidence type="ECO:0000305" key="2"/>
<reference key="1">
    <citation type="journal article" date="1990" name="FEMS Microbiol. Lett.">
        <title>Organization and nucleotide sequence of the genes for ribosomal protein S2 and elongation factor Ts in Spirulina platensis.</title>
        <authorList>
            <person name="Sanangelantoni A.M."/>
            <person name="Calogero R.C."/>
            <person name="Buttarelli F.R."/>
            <person name="Gualerzi C.O."/>
            <person name="Tiboni O."/>
        </authorList>
    </citation>
    <scope>NUCLEOTIDE SEQUENCE [GENOMIC DNA]</scope>
</reference>
<dbReference type="EMBL" id="X53651">
    <property type="protein sequence ID" value="CAA37701.1"/>
    <property type="molecule type" value="Genomic_DNA"/>
</dbReference>
<dbReference type="SMR" id="P34828"/>
<dbReference type="GO" id="GO:0005737">
    <property type="term" value="C:cytoplasm"/>
    <property type="evidence" value="ECO:0007669"/>
    <property type="project" value="UniProtKB-SubCell"/>
</dbReference>
<dbReference type="GO" id="GO:0003746">
    <property type="term" value="F:translation elongation factor activity"/>
    <property type="evidence" value="ECO:0007669"/>
    <property type="project" value="UniProtKB-KW"/>
</dbReference>
<dbReference type="CDD" id="cd14275">
    <property type="entry name" value="UBA_EF-Ts"/>
    <property type="match status" value="1"/>
</dbReference>
<dbReference type="FunFam" id="1.10.286.20:FF:000001">
    <property type="entry name" value="Elongation factor Ts"/>
    <property type="match status" value="1"/>
</dbReference>
<dbReference type="FunFam" id="1.10.8.10:FF:000001">
    <property type="entry name" value="Elongation factor Ts"/>
    <property type="match status" value="1"/>
</dbReference>
<dbReference type="Gene3D" id="1.10.286.20">
    <property type="match status" value="1"/>
</dbReference>
<dbReference type="Gene3D" id="1.10.8.10">
    <property type="entry name" value="DNA helicase RuvA subunit, C-terminal domain"/>
    <property type="match status" value="1"/>
</dbReference>
<dbReference type="Gene3D" id="3.30.479.20">
    <property type="entry name" value="Elongation factor Ts, dimerisation domain"/>
    <property type="match status" value="2"/>
</dbReference>
<dbReference type="HAMAP" id="MF_00050">
    <property type="entry name" value="EF_Ts"/>
    <property type="match status" value="1"/>
</dbReference>
<dbReference type="InterPro" id="IPR036402">
    <property type="entry name" value="EF-Ts_dimer_sf"/>
</dbReference>
<dbReference type="InterPro" id="IPR001816">
    <property type="entry name" value="Transl_elong_EFTs/EF1B"/>
</dbReference>
<dbReference type="InterPro" id="IPR014039">
    <property type="entry name" value="Transl_elong_EFTs/EF1B_dimer"/>
</dbReference>
<dbReference type="InterPro" id="IPR018101">
    <property type="entry name" value="Transl_elong_Ts_CS"/>
</dbReference>
<dbReference type="InterPro" id="IPR009060">
    <property type="entry name" value="UBA-like_sf"/>
</dbReference>
<dbReference type="NCBIfam" id="TIGR00116">
    <property type="entry name" value="tsf"/>
    <property type="match status" value="1"/>
</dbReference>
<dbReference type="PANTHER" id="PTHR11741">
    <property type="entry name" value="ELONGATION FACTOR TS"/>
    <property type="match status" value="1"/>
</dbReference>
<dbReference type="PANTHER" id="PTHR11741:SF0">
    <property type="entry name" value="ELONGATION FACTOR TS, MITOCHONDRIAL"/>
    <property type="match status" value="1"/>
</dbReference>
<dbReference type="Pfam" id="PF00889">
    <property type="entry name" value="EF_TS"/>
    <property type="match status" value="1"/>
</dbReference>
<dbReference type="SUPFAM" id="SSF54713">
    <property type="entry name" value="Elongation factor Ts (EF-Ts), dimerisation domain"/>
    <property type="match status" value="1"/>
</dbReference>
<dbReference type="SUPFAM" id="SSF46934">
    <property type="entry name" value="UBA-like"/>
    <property type="match status" value="1"/>
</dbReference>
<dbReference type="PROSITE" id="PS01126">
    <property type="entry name" value="EF_TS_1"/>
    <property type="match status" value="1"/>
</dbReference>
<dbReference type="PROSITE" id="PS01127">
    <property type="entry name" value="EF_TS_2"/>
    <property type="match status" value="1"/>
</dbReference>
<feature type="chain" id="PRO_0000161194" description="Elongation factor Ts">
    <location>
        <begin position="1"/>
        <end position="247" status="greater than"/>
    </location>
</feature>
<feature type="region of interest" description="Involved in Mg(2+) ion dislocation from EF-Tu" evidence="1">
    <location>
        <begin position="82"/>
        <end position="85"/>
    </location>
</feature>
<feature type="non-terminal residue">
    <location>
        <position position="247"/>
    </location>
</feature>
<comment type="function">
    <text evidence="1">Associates with the EF-Tu.GDP complex and induces the exchange of GDP to GTP. It remains bound to the aminoacyl-tRNA.EF-Tu.GTP complex up to the GTP hydrolysis stage on the ribosome (By similarity).</text>
</comment>
<comment type="subcellular location">
    <subcellularLocation>
        <location evidence="1">Cytoplasm</location>
    </subcellularLocation>
</comment>
<comment type="similarity">
    <text evidence="2">Belongs to the EF-Ts family.</text>
</comment>
<proteinExistence type="inferred from homology"/>
<sequence>MAAVTAALVKELRERTGLGMMECKKALVEAEGDIERAIDDLRKSGQAKAAKKAGRTAAEGAIAVAVSGDGKTAIMVEINSETDFVARDDNFLGFANKVAEAALAAAKTEAADIAGVELADGSTVEQAREALIQKIGENIQVRRAAILSAESALGAYVHGGKIGVLVALKGGDEALGRDVAMHVAAVAPQVVNPSEVPESDLEREKEIIRAQPDMAGKPAEIVEKMLGGRIQKFLKEISLVEQPFVKD</sequence>
<protein>
    <recommendedName>
        <fullName>Elongation factor Ts</fullName>
        <shortName>EF-Ts</shortName>
    </recommendedName>
</protein>
<accession>P34828</accession>
<organism>
    <name type="scientific">Arthrospira platensis</name>
    <name type="common">Spirulina platensis</name>
    <dbReference type="NCBI Taxonomy" id="118562"/>
    <lineage>
        <taxon>Bacteria</taxon>
        <taxon>Bacillati</taxon>
        <taxon>Cyanobacteriota</taxon>
        <taxon>Cyanophyceae</taxon>
        <taxon>Oscillatoriophycideae</taxon>
        <taxon>Oscillatoriales</taxon>
        <taxon>Microcoleaceae</taxon>
        <taxon>Arthrospira</taxon>
    </lineage>
</organism>
<gene>
    <name type="primary">tsf</name>
</gene>
<keyword id="KW-0963">Cytoplasm</keyword>
<keyword id="KW-0251">Elongation factor</keyword>
<keyword id="KW-0648">Protein biosynthesis</keyword>
<name>EFTS_ARTPT</name>